<name>PSAB_DIOEL</name>
<keyword id="KW-0004">4Fe-4S</keyword>
<keyword id="KW-0148">Chlorophyll</keyword>
<keyword id="KW-0150">Chloroplast</keyword>
<keyword id="KW-0157">Chromophore</keyword>
<keyword id="KW-0249">Electron transport</keyword>
<keyword id="KW-0408">Iron</keyword>
<keyword id="KW-0411">Iron-sulfur</keyword>
<keyword id="KW-0460">Magnesium</keyword>
<keyword id="KW-0472">Membrane</keyword>
<keyword id="KW-0479">Metal-binding</keyword>
<keyword id="KW-0560">Oxidoreductase</keyword>
<keyword id="KW-0602">Photosynthesis</keyword>
<keyword id="KW-0603">Photosystem I</keyword>
<keyword id="KW-0934">Plastid</keyword>
<keyword id="KW-0793">Thylakoid</keyword>
<keyword id="KW-0812">Transmembrane</keyword>
<keyword id="KW-1133">Transmembrane helix</keyword>
<keyword id="KW-0813">Transport</keyword>
<sequence length="734" mass="82415">MALRFPRFSQGLAQDPTTRRIWFGIATAHDFESHDDITEERLYQNIFASHFGQLAIIFLWTSGNLFHVAWQGNFESWIQDPLHVRPIAHAIWDPHFGQPAVEAFTRGGAIGPVNIAYSGVYQWWYTIGLRTNEDLYTGALFLLCLSAISLIAGWLHLQPKWKPSLSWFKNAESRLNHHLSGLFGVSSLAWAGHLVHVAIPGSRGEYVRWNNFLNVLPHPQGLEPLLTGQWNLYAQNSDSSSHLFGTSKGAGTAILTLLGGFHPQTQSLWLTDIAHHHLAIAFLFLVAGHMYRTNFGIGHSIKDLLEAHIPPGGRLGRGHKGLYDTINNSIHFQLGLALASLGVITSLVAQHMYSLPAYAFIAQDFTTQAALYTHHQYIAGFIMTGAFAHGAIFFIRDYNPEQNEDNVLARMLDHKEAIISHLSWASLFLGFHTLGLYVHNDVMLAFGTPEKQILIEPIFAQWIQSAHGKTSYGFDVLLSSTNGPAFNAGRSIWLPGWLNAINENSNSLFLTIGPGDFLVHHAIALGLHTTTLILVKGALDARGSKLMPDKKDFGYSFPCDGPGRGGTCDISAWDAFYLAVFWMLNTIGWVTFYWHWKHITLWQGNVSQFNESSTYLMGWLRDYLWLNSSQLINGYNPFGMNSLSVWAWMFLFGHLVWATGFMFLISWRGYWQELIETLAWAHERTPLANLIRWRDKPVALSIVQARLVGLAHFSVGYIFTYAAFLIASTSGKFG</sequence>
<accession>A6MMK6</accession>
<proteinExistence type="inferred from homology"/>
<organism>
    <name type="scientific">Dioscorea elephantipes</name>
    <name type="common">Elephant's foot yam</name>
    <name type="synonym">Testudinaria elephantipes</name>
    <dbReference type="NCBI Taxonomy" id="145284"/>
    <lineage>
        <taxon>Eukaryota</taxon>
        <taxon>Viridiplantae</taxon>
        <taxon>Streptophyta</taxon>
        <taxon>Embryophyta</taxon>
        <taxon>Tracheophyta</taxon>
        <taxon>Spermatophyta</taxon>
        <taxon>Magnoliopsida</taxon>
        <taxon>Liliopsida</taxon>
        <taxon>Dioscoreales</taxon>
        <taxon>Dioscoreaceae</taxon>
        <taxon>Dioscorea</taxon>
    </lineage>
</organism>
<dbReference type="EC" id="1.97.1.12" evidence="1"/>
<dbReference type="EMBL" id="EF380353">
    <property type="protein sequence ID" value="ABR01429.1"/>
    <property type="molecule type" value="Genomic_DNA"/>
</dbReference>
<dbReference type="RefSeq" id="YP_001294351.1">
    <property type="nucleotide sequence ID" value="NC_009601.1"/>
</dbReference>
<dbReference type="SMR" id="A6MMK6"/>
<dbReference type="GeneID" id="5236606"/>
<dbReference type="GO" id="GO:0009535">
    <property type="term" value="C:chloroplast thylakoid membrane"/>
    <property type="evidence" value="ECO:0007669"/>
    <property type="project" value="UniProtKB-SubCell"/>
</dbReference>
<dbReference type="GO" id="GO:0009522">
    <property type="term" value="C:photosystem I"/>
    <property type="evidence" value="ECO:0007669"/>
    <property type="project" value="UniProtKB-KW"/>
</dbReference>
<dbReference type="GO" id="GO:0051539">
    <property type="term" value="F:4 iron, 4 sulfur cluster binding"/>
    <property type="evidence" value="ECO:0007669"/>
    <property type="project" value="UniProtKB-KW"/>
</dbReference>
<dbReference type="GO" id="GO:0016168">
    <property type="term" value="F:chlorophyll binding"/>
    <property type="evidence" value="ECO:0007669"/>
    <property type="project" value="UniProtKB-KW"/>
</dbReference>
<dbReference type="GO" id="GO:0009055">
    <property type="term" value="F:electron transfer activity"/>
    <property type="evidence" value="ECO:0007669"/>
    <property type="project" value="UniProtKB-UniRule"/>
</dbReference>
<dbReference type="GO" id="GO:0000287">
    <property type="term" value="F:magnesium ion binding"/>
    <property type="evidence" value="ECO:0007669"/>
    <property type="project" value="UniProtKB-UniRule"/>
</dbReference>
<dbReference type="GO" id="GO:0016491">
    <property type="term" value="F:oxidoreductase activity"/>
    <property type="evidence" value="ECO:0007669"/>
    <property type="project" value="UniProtKB-KW"/>
</dbReference>
<dbReference type="GO" id="GO:0015979">
    <property type="term" value="P:photosynthesis"/>
    <property type="evidence" value="ECO:0007669"/>
    <property type="project" value="UniProtKB-UniRule"/>
</dbReference>
<dbReference type="FunFam" id="1.20.1130.10:FF:000001">
    <property type="entry name" value="Photosystem I P700 chlorophyll a apoprotein A2"/>
    <property type="match status" value="1"/>
</dbReference>
<dbReference type="Gene3D" id="1.20.1130.10">
    <property type="entry name" value="Photosystem I PsaA/PsaB"/>
    <property type="match status" value="1"/>
</dbReference>
<dbReference type="HAMAP" id="MF_00482">
    <property type="entry name" value="PSI_PsaB"/>
    <property type="match status" value="1"/>
</dbReference>
<dbReference type="InterPro" id="IPR001280">
    <property type="entry name" value="PSI_PsaA/B"/>
</dbReference>
<dbReference type="InterPro" id="IPR020586">
    <property type="entry name" value="PSI_PsaA/B_CS"/>
</dbReference>
<dbReference type="InterPro" id="IPR036408">
    <property type="entry name" value="PSI_PsaA/B_sf"/>
</dbReference>
<dbReference type="InterPro" id="IPR006244">
    <property type="entry name" value="PSI_PsaB"/>
</dbReference>
<dbReference type="NCBIfam" id="TIGR01336">
    <property type="entry name" value="psaB"/>
    <property type="match status" value="1"/>
</dbReference>
<dbReference type="PANTHER" id="PTHR30128">
    <property type="entry name" value="OUTER MEMBRANE PROTEIN, OMPA-RELATED"/>
    <property type="match status" value="1"/>
</dbReference>
<dbReference type="PANTHER" id="PTHR30128:SF19">
    <property type="entry name" value="PHOTOSYSTEM I P700 CHLOROPHYLL A APOPROTEIN A1-RELATED"/>
    <property type="match status" value="1"/>
</dbReference>
<dbReference type="Pfam" id="PF00223">
    <property type="entry name" value="PsaA_PsaB"/>
    <property type="match status" value="1"/>
</dbReference>
<dbReference type="PIRSF" id="PIRSF002905">
    <property type="entry name" value="PSI_A"/>
    <property type="match status" value="1"/>
</dbReference>
<dbReference type="PRINTS" id="PR00257">
    <property type="entry name" value="PHOTSYSPSAAB"/>
</dbReference>
<dbReference type="SUPFAM" id="SSF81558">
    <property type="entry name" value="Photosystem I subunits PsaA/PsaB"/>
    <property type="match status" value="1"/>
</dbReference>
<dbReference type="PROSITE" id="PS00419">
    <property type="entry name" value="PHOTOSYSTEM_I_PSAAB"/>
    <property type="match status" value="1"/>
</dbReference>
<gene>
    <name evidence="1" type="primary">psaB</name>
</gene>
<evidence type="ECO:0000255" key="1">
    <source>
        <dbReference type="HAMAP-Rule" id="MF_00482"/>
    </source>
</evidence>
<protein>
    <recommendedName>
        <fullName evidence="1">Photosystem I P700 chlorophyll a apoprotein A2</fullName>
        <ecNumber evidence="1">1.97.1.12</ecNumber>
    </recommendedName>
    <alternativeName>
        <fullName evidence="1">PSI-B</fullName>
    </alternativeName>
    <alternativeName>
        <fullName evidence="1">PsaB</fullName>
    </alternativeName>
</protein>
<feature type="chain" id="PRO_0000300043" description="Photosystem I P700 chlorophyll a apoprotein A2">
    <location>
        <begin position="1"/>
        <end position="734"/>
    </location>
</feature>
<feature type="transmembrane region" description="Helical; Name=I" evidence="1">
    <location>
        <begin position="46"/>
        <end position="69"/>
    </location>
</feature>
<feature type="transmembrane region" description="Helical; Name=II" evidence="1">
    <location>
        <begin position="135"/>
        <end position="158"/>
    </location>
</feature>
<feature type="transmembrane region" description="Helical; Name=III" evidence="1">
    <location>
        <begin position="175"/>
        <end position="199"/>
    </location>
</feature>
<feature type="transmembrane region" description="Helical; Name=IV" evidence="1">
    <location>
        <begin position="273"/>
        <end position="291"/>
    </location>
</feature>
<feature type="transmembrane region" description="Helical; Name=V" evidence="1">
    <location>
        <begin position="330"/>
        <end position="353"/>
    </location>
</feature>
<feature type="transmembrane region" description="Helical; Name=VI" evidence="1">
    <location>
        <begin position="369"/>
        <end position="395"/>
    </location>
</feature>
<feature type="transmembrane region" description="Helical; Name=VII" evidence="1">
    <location>
        <begin position="417"/>
        <end position="439"/>
    </location>
</feature>
<feature type="transmembrane region" description="Helical; Name=VIII" evidence="1">
    <location>
        <begin position="517"/>
        <end position="535"/>
    </location>
</feature>
<feature type="transmembrane region" description="Helical; Name=IX" evidence="1">
    <location>
        <begin position="575"/>
        <end position="596"/>
    </location>
</feature>
<feature type="transmembrane region" description="Helical; Name=X" evidence="1">
    <location>
        <begin position="643"/>
        <end position="665"/>
    </location>
</feature>
<feature type="transmembrane region" description="Helical; Name=XI" evidence="1">
    <location>
        <begin position="707"/>
        <end position="727"/>
    </location>
</feature>
<feature type="binding site" evidence="1">
    <location>
        <position position="559"/>
    </location>
    <ligand>
        <name>[4Fe-4S] cluster</name>
        <dbReference type="ChEBI" id="CHEBI:49883"/>
        <note>ligand shared between dimeric partners</note>
    </ligand>
</feature>
<feature type="binding site" evidence="1">
    <location>
        <position position="568"/>
    </location>
    <ligand>
        <name>[4Fe-4S] cluster</name>
        <dbReference type="ChEBI" id="CHEBI:49883"/>
        <note>ligand shared between dimeric partners</note>
    </ligand>
</feature>
<feature type="binding site" description="axial binding residue" evidence="1">
    <location>
        <position position="654"/>
    </location>
    <ligand>
        <name>chlorophyll a</name>
        <dbReference type="ChEBI" id="CHEBI:58416"/>
        <label>B1</label>
    </ligand>
    <ligandPart>
        <name>Mg</name>
        <dbReference type="ChEBI" id="CHEBI:25107"/>
    </ligandPart>
</feature>
<feature type="binding site" description="axial binding residue" evidence="1">
    <location>
        <position position="662"/>
    </location>
    <ligand>
        <name>chlorophyll a</name>
        <dbReference type="ChEBI" id="CHEBI:58416"/>
        <label>B3</label>
    </ligand>
    <ligandPart>
        <name>Mg</name>
        <dbReference type="ChEBI" id="CHEBI:25107"/>
    </ligandPart>
</feature>
<feature type="binding site" evidence="1">
    <location>
        <position position="670"/>
    </location>
    <ligand>
        <name>chlorophyll a</name>
        <dbReference type="ChEBI" id="CHEBI:58416"/>
        <label>B3</label>
    </ligand>
</feature>
<feature type="binding site" evidence="1">
    <location>
        <position position="671"/>
    </location>
    <ligand>
        <name>phylloquinone</name>
        <dbReference type="ChEBI" id="CHEBI:18067"/>
        <label>B</label>
    </ligand>
</feature>
<reference key="1">
    <citation type="journal article" date="2007" name="Mol. Phylogenet. Evol.">
        <title>Phylogenetic and evolutionary implications of complete chloroplast genome sequences of four early-diverging angiosperms: Buxus (Buxaceae), Chloranthus (Chloranthaceae), Dioscorea (Dioscoreaceae), and Illicium (Schisandraceae).</title>
        <authorList>
            <person name="Hansen D.R."/>
            <person name="Dastidar S.G."/>
            <person name="Cai Z."/>
            <person name="Penaflor C."/>
            <person name="Kuehl J.V."/>
            <person name="Boore J.L."/>
            <person name="Jansen R.K."/>
        </authorList>
    </citation>
    <scope>NUCLEOTIDE SEQUENCE [LARGE SCALE GENOMIC DNA]</scope>
</reference>
<comment type="function">
    <text evidence="1">PsaA and PsaB bind P700, the primary electron donor of photosystem I (PSI), as well as the electron acceptors A0, A1 and FX. PSI is a plastocyanin-ferredoxin oxidoreductase, converting photonic excitation into a charge separation, which transfers an electron from the donor P700 chlorophyll pair to the spectroscopically characterized acceptors A0, A1, FX, FA and FB in turn. Oxidized P700 is reduced on the lumenal side of the thylakoid membrane by plastocyanin.</text>
</comment>
<comment type="catalytic activity">
    <reaction evidence="1">
        <text>reduced [plastocyanin] + hnu + oxidized [2Fe-2S]-[ferredoxin] = oxidized [plastocyanin] + reduced [2Fe-2S]-[ferredoxin]</text>
        <dbReference type="Rhea" id="RHEA:30407"/>
        <dbReference type="Rhea" id="RHEA-COMP:10000"/>
        <dbReference type="Rhea" id="RHEA-COMP:10001"/>
        <dbReference type="Rhea" id="RHEA-COMP:10039"/>
        <dbReference type="Rhea" id="RHEA-COMP:10040"/>
        <dbReference type="ChEBI" id="CHEBI:29036"/>
        <dbReference type="ChEBI" id="CHEBI:30212"/>
        <dbReference type="ChEBI" id="CHEBI:33737"/>
        <dbReference type="ChEBI" id="CHEBI:33738"/>
        <dbReference type="ChEBI" id="CHEBI:49552"/>
        <dbReference type="EC" id="1.97.1.12"/>
    </reaction>
</comment>
<comment type="cofactor">
    <text evidence="1">P700 is a chlorophyll a/chlorophyll a' dimer, A0 is one or more chlorophyll a, A1 is one or both phylloquinones and FX is a shared 4Fe-4S iron-sulfur center.</text>
</comment>
<comment type="subunit">
    <text evidence="1">The PsaA/B heterodimer binds the P700 chlorophyll special pair and subsequent electron acceptors. PSI consists of a core antenna complex that captures photons, and an electron transfer chain that converts photonic excitation into a charge separation. The eukaryotic PSI reaction center is composed of at least 11 subunits.</text>
</comment>
<comment type="subcellular location">
    <subcellularLocation>
        <location evidence="1">Plastid</location>
        <location evidence="1">Chloroplast thylakoid membrane</location>
        <topology evidence="1">Multi-pass membrane protein</topology>
    </subcellularLocation>
</comment>
<comment type="similarity">
    <text evidence="1">Belongs to the PsaA/PsaB family.</text>
</comment>
<geneLocation type="chloroplast"/>